<evidence type="ECO:0000250" key="1"/>
<evidence type="ECO:0000255" key="2"/>
<evidence type="ECO:0000255" key="3">
    <source>
        <dbReference type="PROSITE-ProRule" id="PRU00623"/>
    </source>
</evidence>
<evidence type="ECO:0000305" key="4"/>
<keyword id="KW-0254">Endocytosis</keyword>
<keyword id="KW-0256">Endoplasmic reticulum</keyword>
<keyword id="KW-0967">Endosome</keyword>
<keyword id="KW-0458">Lysosome</keyword>
<keyword id="KW-0472">Membrane</keyword>
<keyword id="KW-0479">Metal-binding</keyword>
<keyword id="KW-1185">Reference proteome</keyword>
<keyword id="KW-0808">Transferase</keyword>
<keyword id="KW-0812">Transmembrane</keyword>
<keyword id="KW-1133">Transmembrane helix</keyword>
<keyword id="KW-0833">Ubl conjugation pathway</keyword>
<keyword id="KW-0862">Zinc</keyword>
<keyword id="KW-0863">Zinc-finger</keyword>
<reference key="1">
    <citation type="submission" date="2004-12" db="EMBL/GenBank/DDBJ databases">
        <authorList>
            <consortium name="NIH - Xenopus Gene Collection (XGC) project"/>
        </authorList>
    </citation>
    <scope>NUCLEOTIDE SEQUENCE [LARGE SCALE MRNA]</scope>
    <source>
        <tissue>Testis</tissue>
    </source>
</reference>
<protein>
    <recommendedName>
        <fullName>E3 ubiquitin-protein ligase MARCHF2</fullName>
        <ecNumber>2.3.2.27</ecNumber>
    </recommendedName>
    <alternativeName>
        <fullName>Membrane-associated RING finger protein 2</fullName>
    </alternativeName>
    <alternativeName>
        <fullName>Membrane-associated RING-CH protein II</fullName>
        <shortName>MARCH-II</shortName>
    </alternativeName>
    <alternativeName>
        <fullName evidence="4">RING-type E3 ubiquitin transferase MARCHF2</fullName>
    </alternativeName>
</protein>
<name>MARH2_XENLA</name>
<feature type="chain" id="PRO_0000274505" description="E3 ubiquitin-protein ligase MARCHF2">
    <location>
        <begin position="1"/>
        <end position="246"/>
    </location>
</feature>
<feature type="transmembrane region" description="Helical" evidence="2">
    <location>
        <begin position="138"/>
        <end position="158"/>
    </location>
</feature>
<feature type="transmembrane region" description="Helical" evidence="2">
    <location>
        <begin position="175"/>
        <end position="195"/>
    </location>
</feature>
<feature type="zinc finger region" description="RING-CH-type" evidence="3">
    <location>
        <begin position="56"/>
        <end position="116"/>
    </location>
</feature>
<feature type="binding site" evidence="3">
    <location>
        <position position="64"/>
    </location>
    <ligand>
        <name>Zn(2+)</name>
        <dbReference type="ChEBI" id="CHEBI:29105"/>
        <label>1</label>
    </ligand>
</feature>
<feature type="binding site" evidence="3">
    <location>
        <position position="67"/>
    </location>
    <ligand>
        <name>Zn(2+)</name>
        <dbReference type="ChEBI" id="CHEBI:29105"/>
        <label>1</label>
    </ligand>
</feature>
<feature type="binding site" evidence="3">
    <location>
        <position position="80"/>
    </location>
    <ligand>
        <name>Zn(2+)</name>
        <dbReference type="ChEBI" id="CHEBI:29105"/>
        <label>2</label>
    </ligand>
</feature>
<feature type="binding site" evidence="3">
    <location>
        <position position="82"/>
    </location>
    <ligand>
        <name>Zn(2+)</name>
        <dbReference type="ChEBI" id="CHEBI:29105"/>
        <label>2</label>
    </ligand>
</feature>
<feature type="binding site" evidence="3">
    <location>
        <position position="90"/>
    </location>
    <ligand>
        <name>Zn(2+)</name>
        <dbReference type="ChEBI" id="CHEBI:29105"/>
        <label>1</label>
    </ligand>
</feature>
<feature type="binding site" evidence="3">
    <location>
        <position position="93"/>
    </location>
    <ligand>
        <name>Zn(2+)</name>
        <dbReference type="ChEBI" id="CHEBI:29105"/>
        <label>1</label>
    </ligand>
</feature>
<feature type="binding site" evidence="3">
    <location>
        <position position="106"/>
    </location>
    <ligand>
        <name>Zn(2+)</name>
        <dbReference type="ChEBI" id="CHEBI:29105"/>
        <label>2</label>
    </ligand>
</feature>
<feature type="binding site" evidence="3">
    <location>
        <position position="109"/>
    </location>
    <ligand>
        <name>Zn(2+)</name>
        <dbReference type="ChEBI" id="CHEBI:29105"/>
        <label>2</label>
    </ligand>
</feature>
<gene>
    <name type="primary">marchf2</name>
    <name type="synonym">march2</name>
</gene>
<sequence length="246" mass="27481">MTTGDCCHLPGSLCDCTDSATFLKSLEESDLGRPQYVTQVTAKDGQLLSTVIKALGTQSDGPICRICHEGGNGERLLSPCDCTGTLGTVHKTCLEKWLSSSNTSYCELCHTEFAVERRPRPVTEWLKDPGPRHEKRTLFCDMVCFLFITPLAAISGWLCLRGAQDHLQFNSRLEAVGLIALTIALFTIYVLWTLVSFRYHCQLYSEWRRTNQKVLLLIPDSKTATTIHHSFLSSKLLKFASDETTV</sequence>
<proteinExistence type="evidence at transcript level"/>
<dbReference type="EC" id="2.3.2.27"/>
<dbReference type="EMBL" id="BC087383">
    <property type="protein sequence ID" value="AAH87383.1"/>
    <property type="molecule type" value="mRNA"/>
</dbReference>
<dbReference type="RefSeq" id="NP_001088730.1">
    <property type="nucleotide sequence ID" value="NM_001095261.1"/>
</dbReference>
<dbReference type="SMR" id="Q5PQ35"/>
<dbReference type="DNASU" id="495994"/>
<dbReference type="GeneID" id="495994"/>
<dbReference type="KEGG" id="xla:495994"/>
<dbReference type="AGR" id="Xenbase:XB-GENE-945920"/>
<dbReference type="CTD" id="495994"/>
<dbReference type="Xenbase" id="XB-GENE-945920">
    <property type="gene designation" value="marchf2.S"/>
</dbReference>
<dbReference type="OMA" id="ICHEGNN"/>
<dbReference type="OrthoDB" id="273089at2759"/>
<dbReference type="UniPathway" id="UPA00143"/>
<dbReference type="Proteomes" id="UP000186698">
    <property type="component" value="Chromosome 1S"/>
</dbReference>
<dbReference type="Bgee" id="495994">
    <property type="expression patterns" value="Expressed in testis and 19 other cell types or tissues"/>
</dbReference>
<dbReference type="GO" id="GO:0031410">
    <property type="term" value="C:cytoplasmic vesicle"/>
    <property type="evidence" value="ECO:0000250"/>
    <property type="project" value="UniProtKB"/>
</dbReference>
<dbReference type="GO" id="GO:0005783">
    <property type="term" value="C:endoplasmic reticulum"/>
    <property type="evidence" value="ECO:0000250"/>
    <property type="project" value="UniProtKB"/>
</dbReference>
<dbReference type="GO" id="GO:0005789">
    <property type="term" value="C:endoplasmic reticulum membrane"/>
    <property type="evidence" value="ECO:0007669"/>
    <property type="project" value="UniProtKB-SubCell"/>
</dbReference>
<dbReference type="GO" id="GO:0010008">
    <property type="term" value="C:endosome membrane"/>
    <property type="evidence" value="ECO:0007669"/>
    <property type="project" value="UniProtKB-SubCell"/>
</dbReference>
<dbReference type="GO" id="GO:0005765">
    <property type="term" value="C:lysosomal membrane"/>
    <property type="evidence" value="ECO:0007669"/>
    <property type="project" value="UniProtKB-SubCell"/>
</dbReference>
<dbReference type="GO" id="GO:0061630">
    <property type="term" value="F:ubiquitin protein ligase activity"/>
    <property type="evidence" value="ECO:0000250"/>
    <property type="project" value="UniProtKB"/>
</dbReference>
<dbReference type="GO" id="GO:0004842">
    <property type="term" value="F:ubiquitin-protein transferase activity"/>
    <property type="evidence" value="ECO:0000318"/>
    <property type="project" value="GO_Central"/>
</dbReference>
<dbReference type="GO" id="GO:0008270">
    <property type="term" value="F:zinc ion binding"/>
    <property type="evidence" value="ECO:0007669"/>
    <property type="project" value="UniProtKB-KW"/>
</dbReference>
<dbReference type="GO" id="GO:0006897">
    <property type="term" value="P:endocytosis"/>
    <property type="evidence" value="ECO:0007669"/>
    <property type="project" value="UniProtKB-KW"/>
</dbReference>
<dbReference type="GO" id="GO:0016567">
    <property type="term" value="P:protein ubiquitination"/>
    <property type="evidence" value="ECO:0000250"/>
    <property type="project" value="UniProtKB"/>
</dbReference>
<dbReference type="CDD" id="cd16808">
    <property type="entry name" value="RING_CH-C4HC3_MARCH2"/>
    <property type="match status" value="1"/>
</dbReference>
<dbReference type="FunFam" id="3.30.40.10:FF:000119">
    <property type="entry name" value="E3 ubiquitin-protein ligase MARCH2"/>
    <property type="match status" value="1"/>
</dbReference>
<dbReference type="Gene3D" id="3.30.40.10">
    <property type="entry name" value="Zinc/RING finger domain, C3HC4 (zinc finger)"/>
    <property type="match status" value="1"/>
</dbReference>
<dbReference type="InterPro" id="IPR011016">
    <property type="entry name" value="Znf_RING-CH"/>
</dbReference>
<dbReference type="InterPro" id="IPR013083">
    <property type="entry name" value="Znf_RING/FYVE/PHD"/>
</dbReference>
<dbReference type="PANTHER" id="PTHR46065">
    <property type="entry name" value="E3 UBIQUITIN-PROTEIN LIGASE MARCH 2/3 FAMILY MEMBER"/>
    <property type="match status" value="1"/>
</dbReference>
<dbReference type="PANTHER" id="PTHR46065:SF4">
    <property type="entry name" value="E3 UBIQUITIN-PROTEIN LIGASE MARCHF2"/>
    <property type="match status" value="1"/>
</dbReference>
<dbReference type="Pfam" id="PF12906">
    <property type="entry name" value="RINGv"/>
    <property type="match status" value="1"/>
</dbReference>
<dbReference type="SMART" id="SM00744">
    <property type="entry name" value="RINGv"/>
    <property type="match status" value="1"/>
</dbReference>
<dbReference type="SUPFAM" id="SSF57850">
    <property type="entry name" value="RING/U-box"/>
    <property type="match status" value="1"/>
</dbReference>
<dbReference type="PROSITE" id="PS51292">
    <property type="entry name" value="ZF_RING_CH"/>
    <property type="match status" value="1"/>
</dbReference>
<accession>Q5PQ35</accession>
<organism>
    <name type="scientific">Xenopus laevis</name>
    <name type="common">African clawed frog</name>
    <dbReference type="NCBI Taxonomy" id="8355"/>
    <lineage>
        <taxon>Eukaryota</taxon>
        <taxon>Metazoa</taxon>
        <taxon>Chordata</taxon>
        <taxon>Craniata</taxon>
        <taxon>Vertebrata</taxon>
        <taxon>Euteleostomi</taxon>
        <taxon>Amphibia</taxon>
        <taxon>Batrachia</taxon>
        <taxon>Anura</taxon>
        <taxon>Pipoidea</taxon>
        <taxon>Pipidae</taxon>
        <taxon>Xenopodinae</taxon>
        <taxon>Xenopus</taxon>
        <taxon>Xenopus</taxon>
    </lineage>
</organism>
<comment type="function">
    <text evidence="1">E3 ubiquitin-protein ligase which may be involved in endosomal trafficking. E3 ubiquitin ligases accept ubiquitin from an E2 ubiquitin-conjugating enzyme in the form of a thioester and then directly transfer the ubiquitin to targeted substrates.</text>
</comment>
<comment type="catalytic activity">
    <reaction>
        <text>S-ubiquitinyl-[E2 ubiquitin-conjugating enzyme]-L-cysteine + [acceptor protein]-L-lysine = [E2 ubiquitin-conjugating enzyme]-L-cysteine + N(6)-ubiquitinyl-[acceptor protein]-L-lysine.</text>
        <dbReference type="EC" id="2.3.2.27"/>
    </reaction>
</comment>
<comment type="pathway">
    <text>Protein modification; protein ubiquitination.</text>
</comment>
<comment type="subcellular location">
    <subcellularLocation>
        <location>Endoplasmic reticulum membrane</location>
        <topology>Multi-pass membrane protein</topology>
    </subcellularLocation>
    <subcellularLocation>
        <location>Lysosome membrane</location>
        <topology>Multi-pass membrane protein</topology>
    </subcellularLocation>
    <subcellularLocation>
        <location evidence="1">Endosome membrane</location>
        <topology evidence="1">Multi-pass membrane protein</topology>
    </subcellularLocation>
</comment>
<comment type="domain">
    <text evidence="3">The RING-CH-type zinc finger domain is required for E3 ligase activity.</text>
</comment>